<organism>
    <name type="scientific">Mycobacterium tuberculosis (strain CDC 1551 / Oshkosh)</name>
    <dbReference type="NCBI Taxonomy" id="83331"/>
    <lineage>
        <taxon>Bacteria</taxon>
        <taxon>Bacillati</taxon>
        <taxon>Actinomycetota</taxon>
        <taxon>Actinomycetes</taxon>
        <taxon>Mycobacteriales</taxon>
        <taxon>Mycobacteriaceae</taxon>
        <taxon>Mycobacterium</taxon>
        <taxon>Mycobacterium tuberculosis complex</taxon>
    </lineage>
</organism>
<name>RL6_MYCTO</name>
<proteinExistence type="inferred from homology"/>
<dbReference type="EMBL" id="AE000516">
    <property type="protein sequence ID" value="AAK44978.1"/>
    <property type="molecule type" value="Genomic_DNA"/>
</dbReference>
<dbReference type="PIR" id="B70644">
    <property type="entry name" value="B70644"/>
</dbReference>
<dbReference type="RefSeq" id="WP_003403673.1">
    <property type="nucleotide sequence ID" value="NZ_KK341227.1"/>
</dbReference>
<dbReference type="SMR" id="P9WH80"/>
<dbReference type="GeneID" id="45424684"/>
<dbReference type="KEGG" id="mtc:MT0744"/>
<dbReference type="PATRIC" id="fig|83331.31.peg.797"/>
<dbReference type="HOGENOM" id="CLU_065464_1_2_11"/>
<dbReference type="Proteomes" id="UP000001020">
    <property type="component" value="Chromosome"/>
</dbReference>
<dbReference type="GO" id="GO:0022625">
    <property type="term" value="C:cytosolic large ribosomal subunit"/>
    <property type="evidence" value="ECO:0007669"/>
    <property type="project" value="TreeGrafter"/>
</dbReference>
<dbReference type="GO" id="GO:0019843">
    <property type="term" value="F:rRNA binding"/>
    <property type="evidence" value="ECO:0007669"/>
    <property type="project" value="UniProtKB-UniRule"/>
</dbReference>
<dbReference type="GO" id="GO:0003735">
    <property type="term" value="F:structural constituent of ribosome"/>
    <property type="evidence" value="ECO:0007669"/>
    <property type="project" value="InterPro"/>
</dbReference>
<dbReference type="GO" id="GO:0002181">
    <property type="term" value="P:cytoplasmic translation"/>
    <property type="evidence" value="ECO:0007669"/>
    <property type="project" value="TreeGrafter"/>
</dbReference>
<dbReference type="FunFam" id="3.90.930.12:FF:000001">
    <property type="entry name" value="50S ribosomal protein L6"/>
    <property type="match status" value="1"/>
</dbReference>
<dbReference type="FunFam" id="3.90.930.12:FF:000002">
    <property type="entry name" value="50S ribosomal protein L6"/>
    <property type="match status" value="1"/>
</dbReference>
<dbReference type="Gene3D" id="3.90.930.12">
    <property type="entry name" value="Ribosomal protein L6, alpha-beta domain"/>
    <property type="match status" value="2"/>
</dbReference>
<dbReference type="HAMAP" id="MF_01365_B">
    <property type="entry name" value="Ribosomal_uL6_B"/>
    <property type="match status" value="1"/>
</dbReference>
<dbReference type="InterPro" id="IPR000702">
    <property type="entry name" value="Ribosomal_uL6-like"/>
</dbReference>
<dbReference type="InterPro" id="IPR036789">
    <property type="entry name" value="Ribosomal_uL6-like_a/b-dom_sf"/>
</dbReference>
<dbReference type="InterPro" id="IPR020040">
    <property type="entry name" value="Ribosomal_uL6_a/b-dom"/>
</dbReference>
<dbReference type="InterPro" id="IPR019906">
    <property type="entry name" value="Ribosomal_uL6_bac-type"/>
</dbReference>
<dbReference type="InterPro" id="IPR002358">
    <property type="entry name" value="Ribosomal_uL6_CS"/>
</dbReference>
<dbReference type="NCBIfam" id="TIGR03654">
    <property type="entry name" value="L6_bact"/>
    <property type="match status" value="1"/>
</dbReference>
<dbReference type="PANTHER" id="PTHR11655">
    <property type="entry name" value="60S/50S RIBOSOMAL PROTEIN L6/L9"/>
    <property type="match status" value="1"/>
</dbReference>
<dbReference type="PANTHER" id="PTHR11655:SF14">
    <property type="entry name" value="LARGE RIBOSOMAL SUBUNIT PROTEIN UL6M"/>
    <property type="match status" value="1"/>
</dbReference>
<dbReference type="Pfam" id="PF00347">
    <property type="entry name" value="Ribosomal_L6"/>
    <property type="match status" value="2"/>
</dbReference>
<dbReference type="PIRSF" id="PIRSF002162">
    <property type="entry name" value="Ribosomal_L6"/>
    <property type="match status" value="1"/>
</dbReference>
<dbReference type="PRINTS" id="PR00059">
    <property type="entry name" value="RIBOSOMALL6"/>
</dbReference>
<dbReference type="SUPFAM" id="SSF56053">
    <property type="entry name" value="Ribosomal protein L6"/>
    <property type="match status" value="2"/>
</dbReference>
<dbReference type="PROSITE" id="PS00525">
    <property type="entry name" value="RIBOSOMAL_L6_1"/>
    <property type="match status" value="1"/>
</dbReference>
<comment type="function">
    <text evidence="1">This protein binds to the 23S rRNA, and is important in its secondary structure. It is located near the subunit interface in the base of the L7/L12 stalk, and near the tRNA binding site of the peptidyltransferase center.</text>
</comment>
<comment type="subunit">
    <text evidence="1">Part of the 50S ribosomal subunit.</text>
</comment>
<comment type="similarity">
    <text evidence="1">Belongs to the universal ribosomal protein uL6 family.</text>
</comment>
<sequence>MSRIGKQPIPVPAGVDVTIEGQSISVKGPKGTLGLTVAEPIKVARNDDGAIVVTRPDDERRNRSLHGLSRTLVSNLVTGVTQGYTTKMEIFGVGYRVQLKGSNLEFALGYSHPVVIEAPEGITFAVQAPTKFTVSGIDKQKVGQIAANIRRLRRPDPYKGKGVRYEGEQIRRKVGKTGK</sequence>
<gene>
    <name evidence="1" type="primary">rplF</name>
    <name type="ordered locus">MT0744</name>
</gene>
<evidence type="ECO:0000255" key="1">
    <source>
        <dbReference type="HAMAP-Rule" id="MF_01365"/>
    </source>
</evidence>
<evidence type="ECO:0000305" key="2"/>
<feature type="chain" id="PRO_0000428233" description="Large ribosomal subunit protein uL6">
    <location>
        <begin position="1"/>
        <end position="179"/>
    </location>
</feature>
<reference key="1">
    <citation type="journal article" date="2002" name="J. Bacteriol.">
        <title>Whole-genome comparison of Mycobacterium tuberculosis clinical and laboratory strains.</title>
        <authorList>
            <person name="Fleischmann R.D."/>
            <person name="Alland D."/>
            <person name="Eisen J.A."/>
            <person name="Carpenter L."/>
            <person name="White O."/>
            <person name="Peterson J.D."/>
            <person name="DeBoy R.T."/>
            <person name="Dodson R.J."/>
            <person name="Gwinn M.L."/>
            <person name="Haft D.H."/>
            <person name="Hickey E.K."/>
            <person name="Kolonay J.F."/>
            <person name="Nelson W.C."/>
            <person name="Umayam L.A."/>
            <person name="Ermolaeva M.D."/>
            <person name="Salzberg S.L."/>
            <person name="Delcher A."/>
            <person name="Utterback T.R."/>
            <person name="Weidman J.F."/>
            <person name="Khouri H.M."/>
            <person name="Gill J."/>
            <person name="Mikula A."/>
            <person name="Bishai W."/>
            <person name="Jacobs W.R. Jr."/>
            <person name="Venter J.C."/>
            <person name="Fraser C.M."/>
        </authorList>
    </citation>
    <scope>NUCLEOTIDE SEQUENCE [LARGE SCALE GENOMIC DNA]</scope>
    <source>
        <strain>CDC 1551 / Oshkosh</strain>
    </source>
</reference>
<accession>P9WH80</accession>
<accession>L0T7B0</accession>
<accession>P66311</accession>
<accession>P95067</accession>
<keyword id="KW-1185">Reference proteome</keyword>
<keyword id="KW-0687">Ribonucleoprotein</keyword>
<keyword id="KW-0689">Ribosomal protein</keyword>
<keyword id="KW-0694">RNA-binding</keyword>
<keyword id="KW-0699">rRNA-binding</keyword>
<protein>
    <recommendedName>
        <fullName evidence="1">Large ribosomal subunit protein uL6</fullName>
    </recommendedName>
    <alternativeName>
        <fullName evidence="2">50S ribosomal protein L6</fullName>
    </alternativeName>
</protein>